<sequence length="330" mass="37048">MKKVYYDQDANLELLREKKIAIIGYGSQGHAQAQNLKDSGLNVVVGLHKKSKSREKAEADGFTVMKVDEAAQWADIIQILVPDQIQGELYRDKIEEHLKPGKALMFSHGFNIHYGQIVPPPDVDVFLVAPKSPGHLVRRMYLEGKGVPGLIAVYQDATGKAKDLALAYAKGIGCTRAGVFETTFKEETETDLFGEQAVLCGGVTHLIKAGFETLVEAGYAPEMAYFECLHEMKLIVDLIYEGGFSLMRYSISDTAEYGDYMVGPRIITEETKKEMKKVLEEIQNGTFAKNWILENMAGRPVYNAIKRREQEHLIEKVGAELRQMMPWLKK</sequence>
<proteinExistence type="inferred from homology"/>
<accession>Q3AEQ7</accession>
<comment type="function">
    <text evidence="1">Involved in the biosynthesis of branched-chain amino acids (BCAA). Catalyzes an alkyl-migration followed by a ketol-acid reduction of (S)-2-acetolactate (S2AL) to yield (R)-2,3-dihydroxy-isovalerate. In the isomerase reaction, S2AL is rearranged via a Mg-dependent methyl migration to produce 3-hydroxy-3-methyl-2-ketobutyrate (HMKB). In the reductase reaction, this 2-ketoacid undergoes a metal-dependent reduction by NADPH to yield (R)-2,3-dihydroxy-isovalerate.</text>
</comment>
<comment type="catalytic activity">
    <reaction evidence="1">
        <text>(2R)-2,3-dihydroxy-3-methylbutanoate + NADP(+) = (2S)-2-acetolactate + NADPH + H(+)</text>
        <dbReference type="Rhea" id="RHEA:22068"/>
        <dbReference type="ChEBI" id="CHEBI:15378"/>
        <dbReference type="ChEBI" id="CHEBI:49072"/>
        <dbReference type="ChEBI" id="CHEBI:57783"/>
        <dbReference type="ChEBI" id="CHEBI:58349"/>
        <dbReference type="ChEBI" id="CHEBI:58476"/>
        <dbReference type="EC" id="1.1.1.86"/>
    </reaction>
</comment>
<comment type="catalytic activity">
    <reaction evidence="1">
        <text>(2R,3R)-2,3-dihydroxy-3-methylpentanoate + NADP(+) = (S)-2-ethyl-2-hydroxy-3-oxobutanoate + NADPH + H(+)</text>
        <dbReference type="Rhea" id="RHEA:13493"/>
        <dbReference type="ChEBI" id="CHEBI:15378"/>
        <dbReference type="ChEBI" id="CHEBI:49256"/>
        <dbReference type="ChEBI" id="CHEBI:49258"/>
        <dbReference type="ChEBI" id="CHEBI:57783"/>
        <dbReference type="ChEBI" id="CHEBI:58349"/>
        <dbReference type="EC" id="1.1.1.86"/>
    </reaction>
</comment>
<comment type="cofactor">
    <cofactor evidence="1">
        <name>Mg(2+)</name>
        <dbReference type="ChEBI" id="CHEBI:18420"/>
    </cofactor>
    <text evidence="1">Binds 2 magnesium ions per subunit.</text>
</comment>
<comment type="pathway">
    <text evidence="1">Amino-acid biosynthesis; L-isoleucine biosynthesis; L-isoleucine from 2-oxobutanoate: step 2/4.</text>
</comment>
<comment type="pathway">
    <text evidence="1">Amino-acid biosynthesis; L-valine biosynthesis; L-valine from pyruvate: step 2/4.</text>
</comment>
<comment type="similarity">
    <text evidence="1">Belongs to the ketol-acid reductoisomerase family.</text>
</comment>
<reference key="1">
    <citation type="journal article" date="2005" name="PLoS Genet.">
        <title>Life in hot carbon monoxide: the complete genome sequence of Carboxydothermus hydrogenoformans Z-2901.</title>
        <authorList>
            <person name="Wu M."/>
            <person name="Ren Q."/>
            <person name="Durkin A.S."/>
            <person name="Daugherty S.C."/>
            <person name="Brinkac L.M."/>
            <person name="Dodson R.J."/>
            <person name="Madupu R."/>
            <person name="Sullivan S.A."/>
            <person name="Kolonay J.F."/>
            <person name="Nelson W.C."/>
            <person name="Tallon L.J."/>
            <person name="Jones K.M."/>
            <person name="Ulrich L.E."/>
            <person name="Gonzalez J.M."/>
            <person name="Zhulin I.B."/>
            <person name="Robb F.T."/>
            <person name="Eisen J.A."/>
        </authorList>
    </citation>
    <scope>NUCLEOTIDE SEQUENCE [LARGE SCALE GENOMIC DNA]</scope>
    <source>
        <strain>ATCC BAA-161 / DSM 6008 / Z-2901</strain>
    </source>
</reference>
<name>ILVC_CARHZ</name>
<organism>
    <name type="scientific">Carboxydothermus hydrogenoformans (strain ATCC BAA-161 / DSM 6008 / Z-2901)</name>
    <dbReference type="NCBI Taxonomy" id="246194"/>
    <lineage>
        <taxon>Bacteria</taxon>
        <taxon>Bacillati</taxon>
        <taxon>Bacillota</taxon>
        <taxon>Clostridia</taxon>
        <taxon>Thermoanaerobacterales</taxon>
        <taxon>Thermoanaerobacteraceae</taxon>
        <taxon>Carboxydothermus</taxon>
    </lineage>
</organism>
<feature type="chain" id="PRO_0000226170" description="Ketol-acid reductoisomerase (NADP(+))">
    <location>
        <begin position="1"/>
        <end position="330"/>
    </location>
</feature>
<feature type="domain" description="KARI N-terminal Rossmann" evidence="2">
    <location>
        <begin position="1"/>
        <end position="182"/>
    </location>
</feature>
<feature type="domain" description="KARI C-terminal knotted" evidence="3">
    <location>
        <begin position="183"/>
        <end position="328"/>
    </location>
</feature>
<feature type="active site" evidence="1">
    <location>
        <position position="108"/>
    </location>
</feature>
<feature type="binding site" evidence="1">
    <location>
        <begin position="25"/>
        <end position="28"/>
    </location>
    <ligand>
        <name>NADP(+)</name>
        <dbReference type="ChEBI" id="CHEBI:58349"/>
    </ligand>
</feature>
<feature type="binding site" evidence="1">
    <location>
        <position position="51"/>
    </location>
    <ligand>
        <name>NADP(+)</name>
        <dbReference type="ChEBI" id="CHEBI:58349"/>
    </ligand>
</feature>
<feature type="binding site" evidence="1">
    <location>
        <position position="53"/>
    </location>
    <ligand>
        <name>NADP(+)</name>
        <dbReference type="ChEBI" id="CHEBI:58349"/>
    </ligand>
</feature>
<feature type="binding site" evidence="1">
    <location>
        <begin position="83"/>
        <end position="86"/>
    </location>
    <ligand>
        <name>NADP(+)</name>
        <dbReference type="ChEBI" id="CHEBI:58349"/>
    </ligand>
</feature>
<feature type="binding site" evidence="1">
    <location>
        <position position="134"/>
    </location>
    <ligand>
        <name>NADP(+)</name>
        <dbReference type="ChEBI" id="CHEBI:58349"/>
    </ligand>
</feature>
<feature type="binding site" evidence="1">
    <location>
        <position position="191"/>
    </location>
    <ligand>
        <name>Mg(2+)</name>
        <dbReference type="ChEBI" id="CHEBI:18420"/>
        <label>1</label>
    </ligand>
</feature>
<feature type="binding site" evidence="1">
    <location>
        <position position="191"/>
    </location>
    <ligand>
        <name>Mg(2+)</name>
        <dbReference type="ChEBI" id="CHEBI:18420"/>
        <label>2</label>
    </ligand>
</feature>
<feature type="binding site" evidence="1">
    <location>
        <position position="195"/>
    </location>
    <ligand>
        <name>Mg(2+)</name>
        <dbReference type="ChEBI" id="CHEBI:18420"/>
        <label>1</label>
    </ligand>
</feature>
<feature type="binding site" evidence="1">
    <location>
        <position position="227"/>
    </location>
    <ligand>
        <name>Mg(2+)</name>
        <dbReference type="ChEBI" id="CHEBI:18420"/>
        <label>2</label>
    </ligand>
</feature>
<feature type="binding site" evidence="1">
    <location>
        <position position="231"/>
    </location>
    <ligand>
        <name>Mg(2+)</name>
        <dbReference type="ChEBI" id="CHEBI:18420"/>
        <label>2</label>
    </ligand>
</feature>
<feature type="binding site" evidence="1">
    <location>
        <position position="252"/>
    </location>
    <ligand>
        <name>substrate</name>
    </ligand>
</feature>
<evidence type="ECO:0000255" key="1">
    <source>
        <dbReference type="HAMAP-Rule" id="MF_00435"/>
    </source>
</evidence>
<evidence type="ECO:0000255" key="2">
    <source>
        <dbReference type="PROSITE-ProRule" id="PRU01197"/>
    </source>
</evidence>
<evidence type="ECO:0000255" key="3">
    <source>
        <dbReference type="PROSITE-ProRule" id="PRU01198"/>
    </source>
</evidence>
<protein>
    <recommendedName>
        <fullName evidence="1">Ketol-acid reductoisomerase (NADP(+))</fullName>
        <shortName evidence="1">KARI</shortName>
        <ecNumber evidence="1">1.1.1.86</ecNumber>
    </recommendedName>
    <alternativeName>
        <fullName evidence="1">Acetohydroxy-acid isomeroreductase</fullName>
        <shortName evidence="1">AHIR</shortName>
    </alternativeName>
    <alternativeName>
        <fullName evidence="1">Alpha-keto-beta-hydroxylacyl reductoisomerase</fullName>
    </alternativeName>
    <alternativeName>
        <fullName evidence="1">Ketol-acid reductoisomerase type 1</fullName>
    </alternativeName>
    <alternativeName>
        <fullName evidence="1">Ketol-acid reductoisomerase type I</fullName>
    </alternativeName>
</protein>
<gene>
    <name evidence="1" type="primary">ilvC</name>
    <name type="ordered locus">CHY_0519</name>
</gene>
<dbReference type="EC" id="1.1.1.86" evidence="1"/>
<dbReference type="EMBL" id="CP000141">
    <property type="protein sequence ID" value="ABB13764.1"/>
    <property type="molecule type" value="Genomic_DNA"/>
</dbReference>
<dbReference type="RefSeq" id="WP_011343453.1">
    <property type="nucleotide sequence ID" value="NC_007503.1"/>
</dbReference>
<dbReference type="SMR" id="Q3AEQ7"/>
<dbReference type="FunCoup" id="Q3AEQ7">
    <property type="interactions" value="393"/>
</dbReference>
<dbReference type="STRING" id="246194.CHY_0519"/>
<dbReference type="KEGG" id="chy:CHY_0519"/>
<dbReference type="eggNOG" id="COG0059">
    <property type="taxonomic scope" value="Bacteria"/>
</dbReference>
<dbReference type="HOGENOM" id="CLU_033821_0_1_9"/>
<dbReference type="InParanoid" id="Q3AEQ7"/>
<dbReference type="OrthoDB" id="9804088at2"/>
<dbReference type="UniPathway" id="UPA00047">
    <property type="reaction ID" value="UER00056"/>
</dbReference>
<dbReference type="UniPathway" id="UPA00049">
    <property type="reaction ID" value="UER00060"/>
</dbReference>
<dbReference type="Proteomes" id="UP000002706">
    <property type="component" value="Chromosome"/>
</dbReference>
<dbReference type="GO" id="GO:0005829">
    <property type="term" value="C:cytosol"/>
    <property type="evidence" value="ECO:0007669"/>
    <property type="project" value="TreeGrafter"/>
</dbReference>
<dbReference type="GO" id="GO:0004455">
    <property type="term" value="F:ketol-acid reductoisomerase activity"/>
    <property type="evidence" value="ECO:0007669"/>
    <property type="project" value="UniProtKB-UniRule"/>
</dbReference>
<dbReference type="GO" id="GO:0000287">
    <property type="term" value="F:magnesium ion binding"/>
    <property type="evidence" value="ECO:0007669"/>
    <property type="project" value="UniProtKB-UniRule"/>
</dbReference>
<dbReference type="GO" id="GO:0050661">
    <property type="term" value="F:NADP binding"/>
    <property type="evidence" value="ECO:0007669"/>
    <property type="project" value="InterPro"/>
</dbReference>
<dbReference type="GO" id="GO:0009097">
    <property type="term" value="P:isoleucine biosynthetic process"/>
    <property type="evidence" value="ECO:0007669"/>
    <property type="project" value="UniProtKB-UniRule"/>
</dbReference>
<dbReference type="GO" id="GO:0009099">
    <property type="term" value="P:L-valine biosynthetic process"/>
    <property type="evidence" value="ECO:0007669"/>
    <property type="project" value="UniProtKB-UniRule"/>
</dbReference>
<dbReference type="FunFam" id="3.40.50.720:FF:000023">
    <property type="entry name" value="Ketol-acid reductoisomerase (NADP(+))"/>
    <property type="match status" value="1"/>
</dbReference>
<dbReference type="Gene3D" id="6.10.240.10">
    <property type="match status" value="1"/>
</dbReference>
<dbReference type="Gene3D" id="3.40.50.720">
    <property type="entry name" value="NAD(P)-binding Rossmann-like Domain"/>
    <property type="match status" value="1"/>
</dbReference>
<dbReference type="HAMAP" id="MF_00435">
    <property type="entry name" value="IlvC"/>
    <property type="match status" value="1"/>
</dbReference>
<dbReference type="InterPro" id="IPR008927">
    <property type="entry name" value="6-PGluconate_DH-like_C_sf"/>
</dbReference>
<dbReference type="InterPro" id="IPR013023">
    <property type="entry name" value="KARI"/>
</dbReference>
<dbReference type="InterPro" id="IPR000506">
    <property type="entry name" value="KARI_C"/>
</dbReference>
<dbReference type="InterPro" id="IPR013116">
    <property type="entry name" value="KARI_N"/>
</dbReference>
<dbReference type="InterPro" id="IPR014359">
    <property type="entry name" value="KARI_prok"/>
</dbReference>
<dbReference type="InterPro" id="IPR036291">
    <property type="entry name" value="NAD(P)-bd_dom_sf"/>
</dbReference>
<dbReference type="NCBIfam" id="TIGR00465">
    <property type="entry name" value="ilvC"/>
    <property type="match status" value="1"/>
</dbReference>
<dbReference type="NCBIfam" id="NF004017">
    <property type="entry name" value="PRK05479.1"/>
    <property type="match status" value="1"/>
</dbReference>
<dbReference type="NCBIfam" id="NF009940">
    <property type="entry name" value="PRK13403.1"/>
    <property type="match status" value="1"/>
</dbReference>
<dbReference type="PANTHER" id="PTHR21371">
    <property type="entry name" value="KETOL-ACID REDUCTOISOMERASE, MITOCHONDRIAL"/>
    <property type="match status" value="1"/>
</dbReference>
<dbReference type="PANTHER" id="PTHR21371:SF1">
    <property type="entry name" value="KETOL-ACID REDUCTOISOMERASE, MITOCHONDRIAL"/>
    <property type="match status" value="1"/>
</dbReference>
<dbReference type="Pfam" id="PF01450">
    <property type="entry name" value="KARI_C"/>
    <property type="match status" value="1"/>
</dbReference>
<dbReference type="Pfam" id="PF07991">
    <property type="entry name" value="KARI_N"/>
    <property type="match status" value="1"/>
</dbReference>
<dbReference type="PIRSF" id="PIRSF000116">
    <property type="entry name" value="IlvC_gammaproteo"/>
    <property type="match status" value="1"/>
</dbReference>
<dbReference type="SUPFAM" id="SSF48179">
    <property type="entry name" value="6-phosphogluconate dehydrogenase C-terminal domain-like"/>
    <property type="match status" value="1"/>
</dbReference>
<dbReference type="SUPFAM" id="SSF51735">
    <property type="entry name" value="NAD(P)-binding Rossmann-fold domains"/>
    <property type="match status" value="1"/>
</dbReference>
<dbReference type="PROSITE" id="PS51851">
    <property type="entry name" value="KARI_C"/>
    <property type="match status" value="1"/>
</dbReference>
<dbReference type="PROSITE" id="PS51850">
    <property type="entry name" value="KARI_N"/>
    <property type="match status" value="1"/>
</dbReference>
<keyword id="KW-0028">Amino-acid biosynthesis</keyword>
<keyword id="KW-0100">Branched-chain amino acid biosynthesis</keyword>
<keyword id="KW-0460">Magnesium</keyword>
<keyword id="KW-0479">Metal-binding</keyword>
<keyword id="KW-0521">NADP</keyword>
<keyword id="KW-0560">Oxidoreductase</keyword>
<keyword id="KW-1185">Reference proteome</keyword>